<proteinExistence type="inferred from homology"/>
<sequence length="434" mass="46792">MKSLVLKAAAWLSDLRVAIVLLLLIAACSGLGTAIPQGEPAAFYHERYDAAPWLGVVNGNQLLSWELDHLYTSNWFLLLLAWLGLALLLCSLRRQWPALRASLRWLDYTKPRQLSKLAVATSLDTGDSAAALDQLERQLQQQGWAVRRQQNRLAARRGVIGRVGPLLVHTGLIVFMVGAVVGAFGGQRLERFLAPGRSLELLNPQGDTRLELQLDSFAIQRDPAGRPEQFSSQLLLRDGTGAPAQPAAVSVNHPLRHRGITVYQADWGLAAVTMQLGQSPLLQLPLQTFPELGEQVWGLVLPTRPDGSDPVLLALQSELGPVEVYGADSQQLGLLTVGGESQEILGLPLRIADVMPASGLLIKRDPGVPLVYAGFAITLLGGGLSLIATRQLWAISESGRLHIAGLCNRNLVAFADELPKLGSSAITGAPHDAR</sequence>
<name>CCS1_SYNR3</name>
<keyword id="KW-0201">Cytochrome c-type biogenesis</keyword>
<keyword id="KW-0472">Membrane</keyword>
<keyword id="KW-1185">Reference proteome</keyword>
<keyword id="KW-0793">Thylakoid</keyword>
<keyword id="KW-0812">Transmembrane</keyword>
<keyword id="KW-1133">Transmembrane helix</keyword>
<comment type="function">
    <text evidence="1">Required during biogenesis of c-type cytochromes (cytochrome c6 and cytochrome f) at the step of heme attachment.</text>
</comment>
<comment type="subunit">
    <text evidence="1">May interact with CcsA.</text>
</comment>
<comment type="subcellular location">
    <subcellularLocation>
        <location evidence="1">Cellular thylakoid membrane</location>
        <topology evidence="1">Multi-pass membrane protein</topology>
    </subcellularLocation>
</comment>
<comment type="similarity">
    <text evidence="1">Belongs to the Ccs1/CcsB family.</text>
</comment>
<organism>
    <name type="scientific">Synechococcus sp. (strain RCC307)</name>
    <dbReference type="NCBI Taxonomy" id="316278"/>
    <lineage>
        <taxon>Bacteria</taxon>
        <taxon>Bacillati</taxon>
        <taxon>Cyanobacteriota</taxon>
        <taxon>Cyanophyceae</taxon>
        <taxon>Synechococcales</taxon>
        <taxon>Synechococcaceae</taxon>
        <taxon>Synechococcus</taxon>
    </lineage>
</organism>
<evidence type="ECO:0000255" key="1">
    <source>
        <dbReference type="HAMAP-Rule" id="MF_01392"/>
    </source>
</evidence>
<accession>A5GV87</accession>
<reference key="1">
    <citation type="submission" date="2006-05" db="EMBL/GenBank/DDBJ databases">
        <authorList>
            <consortium name="Genoscope"/>
        </authorList>
    </citation>
    <scope>NUCLEOTIDE SEQUENCE [LARGE SCALE GENOMIC DNA]</scope>
    <source>
        <strain>RCC307</strain>
    </source>
</reference>
<gene>
    <name evidence="1" type="primary">ccsB</name>
    <name evidence="1" type="synonym">ccs1</name>
    <name type="ordered locus">SynRCC307_1893</name>
</gene>
<dbReference type="EMBL" id="CT978603">
    <property type="protein sequence ID" value="CAK28796.1"/>
    <property type="molecule type" value="Genomic_DNA"/>
</dbReference>
<dbReference type="STRING" id="316278.SynRCC307_1893"/>
<dbReference type="KEGG" id="syr:SynRCC307_1893"/>
<dbReference type="eggNOG" id="COG1333">
    <property type="taxonomic scope" value="Bacteria"/>
</dbReference>
<dbReference type="HOGENOM" id="CLU_034630_0_0_3"/>
<dbReference type="OrthoDB" id="9770923at2"/>
<dbReference type="Proteomes" id="UP000001115">
    <property type="component" value="Chromosome"/>
</dbReference>
<dbReference type="GO" id="GO:0031676">
    <property type="term" value="C:plasma membrane-derived thylakoid membrane"/>
    <property type="evidence" value="ECO:0007669"/>
    <property type="project" value="UniProtKB-SubCell"/>
</dbReference>
<dbReference type="GO" id="GO:0017004">
    <property type="term" value="P:cytochrome complex assembly"/>
    <property type="evidence" value="ECO:0007669"/>
    <property type="project" value="UniProtKB-UniRule"/>
</dbReference>
<dbReference type="HAMAP" id="MF_01392">
    <property type="entry name" value="CytC_Ccs1"/>
    <property type="match status" value="1"/>
</dbReference>
<dbReference type="InterPro" id="IPR023494">
    <property type="entry name" value="Cyt_c_bgen_Ccs1/CcsB/ResB"/>
</dbReference>
<dbReference type="InterPro" id="IPR007816">
    <property type="entry name" value="ResB-like_domain"/>
</dbReference>
<dbReference type="PANTHER" id="PTHR31566">
    <property type="entry name" value="CYTOCHROME C BIOGENESIS PROTEIN CCS1, CHLOROPLASTIC"/>
    <property type="match status" value="1"/>
</dbReference>
<dbReference type="PANTHER" id="PTHR31566:SF0">
    <property type="entry name" value="CYTOCHROME C BIOGENESIS PROTEIN CCS1, CHLOROPLASTIC"/>
    <property type="match status" value="1"/>
</dbReference>
<dbReference type="Pfam" id="PF05140">
    <property type="entry name" value="ResB"/>
    <property type="match status" value="2"/>
</dbReference>
<protein>
    <recommendedName>
        <fullName evidence="1">Cytochrome c biogenesis protein CcsB</fullName>
    </recommendedName>
</protein>
<feature type="chain" id="PRO_0000363632" description="Cytochrome c biogenesis protein CcsB">
    <location>
        <begin position="1"/>
        <end position="434"/>
    </location>
</feature>
<feature type="transmembrane region" description="Helical" evidence="1">
    <location>
        <begin position="15"/>
        <end position="35"/>
    </location>
</feature>
<feature type="transmembrane region" description="Helical" evidence="1">
    <location>
        <begin position="73"/>
        <end position="93"/>
    </location>
</feature>
<feature type="transmembrane region" description="Helical" evidence="1">
    <location>
        <begin position="163"/>
        <end position="183"/>
    </location>
</feature>